<keyword id="KW-0963">Cytoplasm</keyword>
<keyword id="KW-0255">Endonuclease</keyword>
<keyword id="KW-0378">Hydrolase</keyword>
<keyword id="KW-0464">Manganese</keyword>
<keyword id="KW-0479">Metal-binding</keyword>
<keyword id="KW-0540">Nuclease</keyword>
<evidence type="ECO:0000255" key="1">
    <source>
        <dbReference type="HAMAP-Rule" id="MF_00052"/>
    </source>
</evidence>
<evidence type="ECO:0000255" key="2">
    <source>
        <dbReference type="PROSITE-ProRule" id="PRU01319"/>
    </source>
</evidence>
<protein>
    <recommendedName>
        <fullName evidence="1">Ribonuclease HII</fullName>
        <shortName evidence="1">RNase HII</shortName>
        <ecNumber evidence="1">3.1.26.4</ecNumber>
    </recommendedName>
</protein>
<proteinExistence type="inferred from homology"/>
<sequence length="214" mass="22805">MTAVRAPRRRASSDEQGGFDFSRPDEIVCGVDEAGRGPLAGPVVAAAVILDPAQPIDGLDDSKALSAKKRDALYELIVARSLSYCVASASVDEIDTLNILHATMLAMKRAVEGLSVLPTLAQIDGNRCPTLTVRAEAIVSGDALVPSISAASILAKVTRDRMLVDLHERFPVYGFNVHAGYGTAKHLAALREHGPCEAHRRSFAPVRAALDLIR</sequence>
<comment type="function">
    <text evidence="1">Endonuclease that specifically degrades the RNA of RNA-DNA hybrids.</text>
</comment>
<comment type="catalytic activity">
    <reaction evidence="1">
        <text>Endonucleolytic cleavage to 5'-phosphomonoester.</text>
        <dbReference type="EC" id="3.1.26.4"/>
    </reaction>
</comment>
<comment type="cofactor">
    <cofactor evidence="1">
        <name>Mn(2+)</name>
        <dbReference type="ChEBI" id="CHEBI:29035"/>
    </cofactor>
    <cofactor evidence="1">
        <name>Mg(2+)</name>
        <dbReference type="ChEBI" id="CHEBI:18420"/>
    </cofactor>
    <text evidence="1">Manganese or magnesium. Binds 1 divalent metal ion per monomer in the absence of substrate. May bind a second metal ion after substrate binding.</text>
</comment>
<comment type="subcellular location">
    <subcellularLocation>
        <location evidence="1">Cytoplasm</location>
    </subcellularLocation>
</comment>
<comment type="similarity">
    <text evidence="1">Belongs to the RNase HII family.</text>
</comment>
<dbReference type="EC" id="3.1.26.4" evidence="1"/>
<dbReference type="EMBL" id="CP000151">
    <property type="protein sequence ID" value="ABB08909.1"/>
    <property type="molecule type" value="Genomic_DNA"/>
</dbReference>
<dbReference type="RefSeq" id="WP_011352447.1">
    <property type="nucleotide sequence ID" value="NC_007510.1"/>
</dbReference>
<dbReference type="SMR" id="Q39F57"/>
<dbReference type="GeneID" id="45095191"/>
<dbReference type="KEGG" id="bur:Bcep18194_A5315"/>
<dbReference type="PATRIC" id="fig|482957.22.peg.2264"/>
<dbReference type="HOGENOM" id="CLU_036532_3_2_4"/>
<dbReference type="Proteomes" id="UP000002705">
    <property type="component" value="Chromosome 1"/>
</dbReference>
<dbReference type="GO" id="GO:0005737">
    <property type="term" value="C:cytoplasm"/>
    <property type="evidence" value="ECO:0007669"/>
    <property type="project" value="UniProtKB-SubCell"/>
</dbReference>
<dbReference type="GO" id="GO:0032299">
    <property type="term" value="C:ribonuclease H2 complex"/>
    <property type="evidence" value="ECO:0007669"/>
    <property type="project" value="TreeGrafter"/>
</dbReference>
<dbReference type="GO" id="GO:0030145">
    <property type="term" value="F:manganese ion binding"/>
    <property type="evidence" value="ECO:0007669"/>
    <property type="project" value="UniProtKB-UniRule"/>
</dbReference>
<dbReference type="GO" id="GO:0003723">
    <property type="term" value="F:RNA binding"/>
    <property type="evidence" value="ECO:0007669"/>
    <property type="project" value="InterPro"/>
</dbReference>
<dbReference type="GO" id="GO:0004523">
    <property type="term" value="F:RNA-DNA hybrid ribonuclease activity"/>
    <property type="evidence" value="ECO:0007669"/>
    <property type="project" value="UniProtKB-UniRule"/>
</dbReference>
<dbReference type="GO" id="GO:0043137">
    <property type="term" value="P:DNA replication, removal of RNA primer"/>
    <property type="evidence" value="ECO:0007669"/>
    <property type="project" value="TreeGrafter"/>
</dbReference>
<dbReference type="GO" id="GO:0006298">
    <property type="term" value="P:mismatch repair"/>
    <property type="evidence" value="ECO:0007669"/>
    <property type="project" value="TreeGrafter"/>
</dbReference>
<dbReference type="CDD" id="cd07182">
    <property type="entry name" value="RNase_HII_bacteria_HII_like"/>
    <property type="match status" value="1"/>
</dbReference>
<dbReference type="FunFam" id="3.30.420.10:FF:000006">
    <property type="entry name" value="Ribonuclease HII"/>
    <property type="match status" value="1"/>
</dbReference>
<dbReference type="Gene3D" id="3.30.420.10">
    <property type="entry name" value="Ribonuclease H-like superfamily/Ribonuclease H"/>
    <property type="match status" value="1"/>
</dbReference>
<dbReference type="HAMAP" id="MF_00052_B">
    <property type="entry name" value="RNase_HII_B"/>
    <property type="match status" value="1"/>
</dbReference>
<dbReference type="InterPro" id="IPR022898">
    <property type="entry name" value="RNase_HII"/>
</dbReference>
<dbReference type="InterPro" id="IPR001352">
    <property type="entry name" value="RNase_HII/HIII"/>
</dbReference>
<dbReference type="InterPro" id="IPR024567">
    <property type="entry name" value="RNase_HII/HIII_dom"/>
</dbReference>
<dbReference type="InterPro" id="IPR012337">
    <property type="entry name" value="RNaseH-like_sf"/>
</dbReference>
<dbReference type="InterPro" id="IPR036397">
    <property type="entry name" value="RNaseH_sf"/>
</dbReference>
<dbReference type="NCBIfam" id="NF000595">
    <property type="entry name" value="PRK00015.1-3"/>
    <property type="match status" value="1"/>
</dbReference>
<dbReference type="NCBIfam" id="NF000596">
    <property type="entry name" value="PRK00015.1-4"/>
    <property type="match status" value="1"/>
</dbReference>
<dbReference type="PANTHER" id="PTHR10954">
    <property type="entry name" value="RIBONUCLEASE H2 SUBUNIT A"/>
    <property type="match status" value="1"/>
</dbReference>
<dbReference type="PANTHER" id="PTHR10954:SF18">
    <property type="entry name" value="RIBONUCLEASE HII"/>
    <property type="match status" value="1"/>
</dbReference>
<dbReference type="Pfam" id="PF01351">
    <property type="entry name" value="RNase_HII"/>
    <property type="match status" value="1"/>
</dbReference>
<dbReference type="SUPFAM" id="SSF53098">
    <property type="entry name" value="Ribonuclease H-like"/>
    <property type="match status" value="1"/>
</dbReference>
<dbReference type="PROSITE" id="PS51975">
    <property type="entry name" value="RNASE_H_2"/>
    <property type="match status" value="1"/>
</dbReference>
<feature type="chain" id="PRO_0000235708" description="Ribonuclease HII">
    <location>
        <begin position="1"/>
        <end position="214"/>
    </location>
</feature>
<feature type="domain" description="RNase H type-2" evidence="2">
    <location>
        <begin position="26"/>
        <end position="214"/>
    </location>
</feature>
<feature type="binding site" evidence="1">
    <location>
        <position position="32"/>
    </location>
    <ligand>
        <name>a divalent metal cation</name>
        <dbReference type="ChEBI" id="CHEBI:60240"/>
    </ligand>
</feature>
<feature type="binding site" evidence="1">
    <location>
        <position position="33"/>
    </location>
    <ligand>
        <name>a divalent metal cation</name>
        <dbReference type="ChEBI" id="CHEBI:60240"/>
    </ligand>
</feature>
<feature type="binding site" evidence="1">
    <location>
        <position position="124"/>
    </location>
    <ligand>
        <name>a divalent metal cation</name>
        <dbReference type="ChEBI" id="CHEBI:60240"/>
    </ligand>
</feature>
<accession>Q39F57</accession>
<reference key="1">
    <citation type="submission" date="2005-10" db="EMBL/GenBank/DDBJ databases">
        <title>Complete sequence of chromosome 1 of Burkholderia sp. 383.</title>
        <authorList>
            <consortium name="US DOE Joint Genome Institute"/>
            <person name="Copeland A."/>
            <person name="Lucas S."/>
            <person name="Lapidus A."/>
            <person name="Barry K."/>
            <person name="Detter J.C."/>
            <person name="Glavina T."/>
            <person name="Hammon N."/>
            <person name="Israni S."/>
            <person name="Pitluck S."/>
            <person name="Chain P."/>
            <person name="Malfatti S."/>
            <person name="Shin M."/>
            <person name="Vergez L."/>
            <person name="Schmutz J."/>
            <person name="Larimer F."/>
            <person name="Land M."/>
            <person name="Kyrpides N."/>
            <person name="Lykidis A."/>
            <person name="Richardson P."/>
        </authorList>
    </citation>
    <scope>NUCLEOTIDE SEQUENCE [LARGE SCALE GENOMIC DNA]</scope>
    <source>
        <strain>ATCC 17760 / DSM 23089 / LMG 22485 / NCIMB 9086 / R18194 / 383</strain>
    </source>
</reference>
<organism>
    <name type="scientific">Burkholderia lata (strain ATCC 17760 / DSM 23089 / LMG 22485 / NCIMB 9086 / R18194 / 383)</name>
    <dbReference type="NCBI Taxonomy" id="482957"/>
    <lineage>
        <taxon>Bacteria</taxon>
        <taxon>Pseudomonadati</taxon>
        <taxon>Pseudomonadota</taxon>
        <taxon>Betaproteobacteria</taxon>
        <taxon>Burkholderiales</taxon>
        <taxon>Burkholderiaceae</taxon>
        <taxon>Burkholderia</taxon>
        <taxon>Burkholderia cepacia complex</taxon>
    </lineage>
</organism>
<name>RNH2_BURL3</name>
<gene>
    <name evidence="1" type="primary">rnhB</name>
    <name type="ordered locus">Bcep18194_A5315</name>
</gene>